<keyword id="KW-0028">Amino-acid biosynthesis</keyword>
<keyword id="KW-0067">ATP-binding</keyword>
<keyword id="KW-0963">Cytoplasm</keyword>
<keyword id="KW-0328">Glycosyltransferase</keyword>
<keyword id="KW-0368">Histidine biosynthesis</keyword>
<keyword id="KW-0547">Nucleotide-binding</keyword>
<keyword id="KW-1185">Reference proteome</keyword>
<keyword id="KW-0808">Transferase</keyword>
<protein>
    <recommendedName>
        <fullName evidence="1">ATP phosphoribosyltransferase</fullName>
        <shortName evidence="1">ATP-PRT</shortName>
        <shortName evidence="1">ATP-PRTase</shortName>
        <ecNumber evidence="1">2.4.2.17</ecNumber>
    </recommendedName>
</protein>
<sequence>MSDYITFALPKGRIMRDSMELFAKIGITCPEMSGDSRKLVFENPETKFRFMAVRATDVPTYVEYGCADLGVVGKDTLLEQGKDLYEPLDLKFGYCRLVVAEPGELSRDEDPADWSNIRVATKYPNITERYFAERGVQVELIKLYGSIELAPLVGLAERIVDLVSTGATMRDNGLVEVETIGEITSRLIVNRASLKTKHQRITRIIQDLERVLAEDAGND</sequence>
<comment type="function">
    <text evidence="1">Catalyzes the condensation of ATP and 5-phosphoribose 1-diphosphate to form N'-(5'-phosphoribosyl)-ATP (PR-ATP). Has a crucial role in the pathway because the rate of histidine biosynthesis seems to be controlled primarily by regulation of HisG enzymatic activity.</text>
</comment>
<comment type="catalytic activity">
    <reaction evidence="1">
        <text>1-(5-phospho-beta-D-ribosyl)-ATP + diphosphate = 5-phospho-alpha-D-ribose 1-diphosphate + ATP</text>
        <dbReference type="Rhea" id="RHEA:18473"/>
        <dbReference type="ChEBI" id="CHEBI:30616"/>
        <dbReference type="ChEBI" id="CHEBI:33019"/>
        <dbReference type="ChEBI" id="CHEBI:58017"/>
        <dbReference type="ChEBI" id="CHEBI:73183"/>
        <dbReference type="EC" id="2.4.2.17"/>
    </reaction>
</comment>
<comment type="pathway">
    <text evidence="1">Amino-acid biosynthesis; L-histidine biosynthesis; L-histidine from 5-phospho-alpha-D-ribose 1-diphosphate: step 1/9.</text>
</comment>
<comment type="subunit">
    <text evidence="1">Heteromultimer composed of HisG and HisZ subunits.</text>
</comment>
<comment type="subcellular location">
    <subcellularLocation>
        <location evidence="1">Cytoplasm</location>
    </subcellularLocation>
</comment>
<comment type="domain">
    <text>Lacks the C-terminal regulatory region which is replaced by HisZ.</text>
</comment>
<comment type="similarity">
    <text evidence="1">Belongs to the ATP phosphoribosyltransferase family. Short subfamily.</text>
</comment>
<feature type="chain" id="PRO_0000229323" description="ATP phosphoribosyltransferase">
    <location>
        <begin position="1"/>
        <end position="219"/>
    </location>
</feature>
<evidence type="ECO:0000255" key="1">
    <source>
        <dbReference type="HAMAP-Rule" id="MF_01018"/>
    </source>
</evidence>
<proteinExistence type="inferred from homology"/>
<organism>
    <name type="scientific">Syntrophotalea carbinolica (strain DSM 2380 / NBRC 103641 / GraBd1)</name>
    <name type="common">Pelobacter carbinolicus</name>
    <dbReference type="NCBI Taxonomy" id="338963"/>
    <lineage>
        <taxon>Bacteria</taxon>
        <taxon>Pseudomonadati</taxon>
        <taxon>Thermodesulfobacteriota</taxon>
        <taxon>Desulfuromonadia</taxon>
        <taxon>Desulfuromonadales</taxon>
        <taxon>Syntrophotaleaceae</taxon>
        <taxon>Syntrophotalea</taxon>
    </lineage>
</organism>
<dbReference type="EC" id="2.4.2.17" evidence="1"/>
<dbReference type="EMBL" id="CP000142">
    <property type="protein sequence ID" value="ABA89925.1"/>
    <property type="molecule type" value="Genomic_DNA"/>
</dbReference>
<dbReference type="RefSeq" id="WP_011342468.1">
    <property type="nucleotide sequence ID" value="NC_007498.2"/>
</dbReference>
<dbReference type="SMR" id="Q3A132"/>
<dbReference type="STRING" id="338963.Pcar_2689"/>
<dbReference type="KEGG" id="pca:Pcar_2689"/>
<dbReference type="eggNOG" id="COG0040">
    <property type="taxonomic scope" value="Bacteria"/>
</dbReference>
<dbReference type="HOGENOM" id="CLU_038115_2_0_7"/>
<dbReference type="OrthoDB" id="9801867at2"/>
<dbReference type="UniPathway" id="UPA00031">
    <property type="reaction ID" value="UER00006"/>
</dbReference>
<dbReference type="Proteomes" id="UP000002534">
    <property type="component" value="Chromosome"/>
</dbReference>
<dbReference type="GO" id="GO:0005737">
    <property type="term" value="C:cytoplasm"/>
    <property type="evidence" value="ECO:0007669"/>
    <property type="project" value="UniProtKB-SubCell"/>
</dbReference>
<dbReference type="GO" id="GO:0005524">
    <property type="term" value="F:ATP binding"/>
    <property type="evidence" value="ECO:0007669"/>
    <property type="project" value="UniProtKB-KW"/>
</dbReference>
<dbReference type="GO" id="GO:0003879">
    <property type="term" value="F:ATP phosphoribosyltransferase activity"/>
    <property type="evidence" value="ECO:0007669"/>
    <property type="project" value="UniProtKB-UniRule"/>
</dbReference>
<dbReference type="GO" id="GO:0000105">
    <property type="term" value="P:L-histidine biosynthetic process"/>
    <property type="evidence" value="ECO:0007669"/>
    <property type="project" value="UniProtKB-UniRule"/>
</dbReference>
<dbReference type="CDD" id="cd13595">
    <property type="entry name" value="PBP2_HisGs"/>
    <property type="match status" value="1"/>
</dbReference>
<dbReference type="FunFam" id="3.40.190.10:FF:000008">
    <property type="entry name" value="ATP phosphoribosyltransferase"/>
    <property type="match status" value="1"/>
</dbReference>
<dbReference type="FunFam" id="3.40.190.10:FF:000011">
    <property type="entry name" value="ATP phosphoribosyltransferase"/>
    <property type="match status" value="1"/>
</dbReference>
<dbReference type="Gene3D" id="3.40.190.10">
    <property type="entry name" value="Periplasmic binding protein-like II"/>
    <property type="match status" value="2"/>
</dbReference>
<dbReference type="HAMAP" id="MF_01018">
    <property type="entry name" value="HisG_Short"/>
    <property type="match status" value="1"/>
</dbReference>
<dbReference type="InterPro" id="IPR013820">
    <property type="entry name" value="ATP_PRibTrfase_cat"/>
</dbReference>
<dbReference type="InterPro" id="IPR018198">
    <property type="entry name" value="ATP_PRibTrfase_CS"/>
</dbReference>
<dbReference type="InterPro" id="IPR001348">
    <property type="entry name" value="ATP_PRibTrfase_HisG"/>
</dbReference>
<dbReference type="InterPro" id="IPR024893">
    <property type="entry name" value="ATP_PRibTrfase_HisG_short"/>
</dbReference>
<dbReference type="NCBIfam" id="TIGR00070">
    <property type="entry name" value="hisG"/>
    <property type="match status" value="1"/>
</dbReference>
<dbReference type="PANTHER" id="PTHR21403:SF8">
    <property type="entry name" value="ATP PHOSPHORIBOSYLTRANSFERASE"/>
    <property type="match status" value="1"/>
</dbReference>
<dbReference type="PANTHER" id="PTHR21403">
    <property type="entry name" value="ATP PHOSPHORIBOSYLTRANSFERASE ATP-PRTASE"/>
    <property type="match status" value="1"/>
</dbReference>
<dbReference type="Pfam" id="PF01634">
    <property type="entry name" value="HisG"/>
    <property type="match status" value="1"/>
</dbReference>
<dbReference type="SUPFAM" id="SSF53850">
    <property type="entry name" value="Periplasmic binding protein-like II"/>
    <property type="match status" value="1"/>
</dbReference>
<dbReference type="PROSITE" id="PS01316">
    <property type="entry name" value="ATP_P_PHORIBOSYLTR"/>
    <property type="match status" value="1"/>
</dbReference>
<gene>
    <name evidence="1" type="primary">hisG</name>
    <name type="ordered locus">Pcar_2689</name>
</gene>
<accession>Q3A132</accession>
<name>HIS1_SYNC1</name>
<reference key="1">
    <citation type="submission" date="2005-10" db="EMBL/GenBank/DDBJ databases">
        <title>Complete sequence of Pelobacter carbinolicus DSM 2380.</title>
        <authorList>
            <person name="Copeland A."/>
            <person name="Lucas S."/>
            <person name="Lapidus A."/>
            <person name="Barry K."/>
            <person name="Detter J.C."/>
            <person name="Glavina T."/>
            <person name="Hammon N."/>
            <person name="Israni S."/>
            <person name="Pitluck S."/>
            <person name="Chertkov O."/>
            <person name="Schmutz J."/>
            <person name="Larimer F."/>
            <person name="Land M."/>
            <person name="Kyrpides N."/>
            <person name="Ivanova N."/>
            <person name="Richardson P."/>
        </authorList>
    </citation>
    <scope>NUCLEOTIDE SEQUENCE [LARGE SCALE GENOMIC DNA]</scope>
    <source>
        <strain>DSM 2380 / NBRC 103641 / GraBd1</strain>
    </source>
</reference>